<comment type="catalytic activity">
    <reaction evidence="1">
        <text>2-O-(alpha-D-mannosyl)-3-phosphoglycerate + H2O = (2R)-2-O-(alpha-D-mannosyl)-glycerate + phosphate</text>
        <dbReference type="Rhea" id="RHEA:19309"/>
        <dbReference type="ChEBI" id="CHEBI:15377"/>
        <dbReference type="ChEBI" id="CHEBI:43474"/>
        <dbReference type="ChEBI" id="CHEBI:57541"/>
        <dbReference type="ChEBI" id="CHEBI:57744"/>
        <dbReference type="EC" id="3.1.3.70"/>
    </reaction>
</comment>
<comment type="cofactor">
    <cofactor evidence="1">
        <name>Mg(2+)</name>
        <dbReference type="ChEBI" id="CHEBI:18420"/>
    </cofactor>
</comment>
<comment type="subcellular location">
    <subcellularLocation>
        <location evidence="1">Cytoplasm</location>
    </subcellularLocation>
</comment>
<comment type="similarity">
    <text evidence="1">Belongs to the HAD-like hydrolase superfamily. MPGP family.</text>
</comment>
<keyword id="KW-0963">Cytoplasm</keyword>
<keyword id="KW-0378">Hydrolase</keyword>
<keyword id="KW-0460">Magnesium</keyword>
<keyword id="KW-0479">Metal-binding</keyword>
<organism>
    <name type="scientific">Escherichia coli O81 (strain ED1a)</name>
    <dbReference type="NCBI Taxonomy" id="585397"/>
    <lineage>
        <taxon>Bacteria</taxon>
        <taxon>Pseudomonadati</taxon>
        <taxon>Pseudomonadota</taxon>
        <taxon>Gammaproteobacteria</taxon>
        <taxon>Enterobacterales</taxon>
        <taxon>Enterobacteriaceae</taxon>
        <taxon>Escherichia</taxon>
    </lineage>
</organism>
<protein>
    <recommendedName>
        <fullName evidence="1">Mannosyl-3-phosphoglycerate phosphatase</fullName>
        <shortName evidence="1">MPGP</shortName>
        <ecNumber evidence="1">3.1.3.70</ecNumber>
    </recommendedName>
</protein>
<reference key="1">
    <citation type="journal article" date="2009" name="PLoS Genet.">
        <title>Organised genome dynamics in the Escherichia coli species results in highly diverse adaptive paths.</title>
        <authorList>
            <person name="Touchon M."/>
            <person name="Hoede C."/>
            <person name="Tenaillon O."/>
            <person name="Barbe V."/>
            <person name="Baeriswyl S."/>
            <person name="Bidet P."/>
            <person name="Bingen E."/>
            <person name="Bonacorsi S."/>
            <person name="Bouchier C."/>
            <person name="Bouvet O."/>
            <person name="Calteau A."/>
            <person name="Chiapello H."/>
            <person name="Clermont O."/>
            <person name="Cruveiller S."/>
            <person name="Danchin A."/>
            <person name="Diard M."/>
            <person name="Dossat C."/>
            <person name="Karoui M.E."/>
            <person name="Frapy E."/>
            <person name="Garry L."/>
            <person name="Ghigo J.M."/>
            <person name="Gilles A.M."/>
            <person name="Johnson J."/>
            <person name="Le Bouguenec C."/>
            <person name="Lescat M."/>
            <person name="Mangenot S."/>
            <person name="Martinez-Jehanne V."/>
            <person name="Matic I."/>
            <person name="Nassif X."/>
            <person name="Oztas S."/>
            <person name="Petit M.A."/>
            <person name="Pichon C."/>
            <person name="Rouy Z."/>
            <person name="Ruf C.S."/>
            <person name="Schneider D."/>
            <person name="Tourret J."/>
            <person name="Vacherie B."/>
            <person name="Vallenet D."/>
            <person name="Medigue C."/>
            <person name="Rocha E.P.C."/>
            <person name="Denamur E."/>
        </authorList>
    </citation>
    <scope>NUCLEOTIDE SEQUENCE [LARGE SCALE GENOMIC DNA]</scope>
    <source>
        <strain>ED1a</strain>
    </source>
</reference>
<gene>
    <name type="ordered locus">ECED1_2221</name>
</gene>
<sequence>MFSIQQPLLVFSDLDGTLLDSHSYDWQPAAPWLSRLREANVPVILCSSKTSAEMLYLQKTLGLQGLPLIAENGAVIQLAEQWQDIDGFPRIISGISHGEISQVLNTLREKEHFKFTTFDDVDDATIAEWTGLSRSQAALTQLHEASVTLIWRDSDERMAQFTARLNELGLQFMQGARFWHVLDASAGKDQAANWIIATYQQLSGKRPTTLGLGDGPNDAPLLEVMDYAVIVKGLNREGGHLHDEDPAHVWRTQREGPEGWREGLDHFFSAR</sequence>
<feature type="chain" id="PRO_1000191305" description="Mannosyl-3-phosphoglycerate phosphatase">
    <location>
        <begin position="1"/>
        <end position="271"/>
    </location>
</feature>
<feature type="active site" description="Nucleophile" evidence="1">
    <location>
        <position position="13"/>
    </location>
</feature>
<feature type="binding site" evidence="1">
    <location>
        <position position="13"/>
    </location>
    <ligand>
        <name>Mg(2+)</name>
        <dbReference type="ChEBI" id="CHEBI:18420"/>
    </ligand>
</feature>
<feature type="binding site" evidence="1">
    <location>
        <position position="15"/>
    </location>
    <ligand>
        <name>Mg(2+)</name>
        <dbReference type="ChEBI" id="CHEBI:18420"/>
    </ligand>
</feature>
<feature type="binding site" evidence="1">
    <location>
        <position position="214"/>
    </location>
    <ligand>
        <name>Mg(2+)</name>
        <dbReference type="ChEBI" id="CHEBI:18420"/>
    </ligand>
</feature>
<name>MPGP_ECO81</name>
<evidence type="ECO:0000255" key="1">
    <source>
        <dbReference type="HAMAP-Rule" id="MF_00617"/>
    </source>
</evidence>
<proteinExistence type="inferred from homology"/>
<dbReference type="EC" id="3.1.3.70" evidence="1"/>
<dbReference type="EMBL" id="CU928162">
    <property type="protein sequence ID" value="CAR08408.2"/>
    <property type="molecule type" value="Genomic_DNA"/>
</dbReference>
<dbReference type="RefSeq" id="WP_000491496.1">
    <property type="nucleotide sequence ID" value="NC_011745.1"/>
</dbReference>
<dbReference type="SMR" id="B7MWE2"/>
<dbReference type="KEGG" id="ecq:ECED1_2221"/>
<dbReference type="HOGENOM" id="CLU_063016_1_0_6"/>
<dbReference type="Proteomes" id="UP000000748">
    <property type="component" value="Chromosome"/>
</dbReference>
<dbReference type="GO" id="GO:0005829">
    <property type="term" value="C:cytosol"/>
    <property type="evidence" value="ECO:0007669"/>
    <property type="project" value="TreeGrafter"/>
</dbReference>
<dbReference type="GO" id="GO:0000287">
    <property type="term" value="F:magnesium ion binding"/>
    <property type="evidence" value="ECO:0007669"/>
    <property type="project" value="TreeGrafter"/>
</dbReference>
<dbReference type="GO" id="GO:0050531">
    <property type="term" value="F:mannosyl-3-phosphoglycerate phosphatase activity"/>
    <property type="evidence" value="ECO:0007669"/>
    <property type="project" value="UniProtKB-UniRule"/>
</dbReference>
<dbReference type="GO" id="GO:0051479">
    <property type="term" value="P:mannosylglycerate biosynthetic process"/>
    <property type="evidence" value="ECO:0007669"/>
    <property type="project" value="InterPro"/>
</dbReference>
<dbReference type="CDD" id="cd07507">
    <property type="entry name" value="HAD_Pase"/>
    <property type="match status" value="1"/>
</dbReference>
<dbReference type="Gene3D" id="3.40.50.1000">
    <property type="entry name" value="HAD superfamily/HAD-like"/>
    <property type="match status" value="1"/>
</dbReference>
<dbReference type="Gene3D" id="3.30.980.20">
    <property type="entry name" value="Putative mannosyl-3-phosphoglycerate phosphatase, domain 2"/>
    <property type="match status" value="1"/>
</dbReference>
<dbReference type="HAMAP" id="MF_00617">
    <property type="entry name" value="MPGP_rel"/>
    <property type="match status" value="1"/>
</dbReference>
<dbReference type="InterPro" id="IPR036412">
    <property type="entry name" value="HAD-like_sf"/>
</dbReference>
<dbReference type="InterPro" id="IPR006381">
    <property type="entry name" value="HAD-SF-IIB-MPGP"/>
</dbReference>
<dbReference type="InterPro" id="IPR006379">
    <property type="entry name" value="HAD-SF_hydro_IIB"/>
</dbReference>
<dbReference type="InterPro" id="IPR023214">
    <property type="entry name" value="HAD_sf"/>
</dbReference>
<dbReference type="InterPro" id="IPR012815">
    <property type="entry name" value="MPG_Pase"/>
</dbReference>
<dbReference type="NCBIfam" id="TIGR01484">
    <property type="entry name" value="HAD-SF-IIB"/>
    <property type="match status" value="1"/>
</dbReference>
<dbReference type="NCBIfam" id="TIGR01486">
    <property type="entry name" value="HAD-SF-IIB-MPGP"/>
    <property type="match status" value="1"/>
</dbReference>
<dbReference type="NCBIfam" id="TIGR02463">
    <property type="entry name" value="MPGP_rel"/>
    <property type="match status" value="1"/>
</dbReference>
<dbReference type="NCBIfam" id="NF002976">
    <property type="entry name" value="PRK03669.1"/>
    <property type="match status" value="1"/>
</dbReference>
<dbReference type="PANTHER" id="PTHR10000:SF8">
    <property type="entry name" value="HAD SUPERFAMILY HYDROLASE-LIKE, TYPE 3"/>
    <property type="match status" value="1"/>
</dbReference>
<dbReference type="PANTHER" id="PTHR10000">
    <property type="entry name" value="PHOSPHOSERINE PHOSPHATASE"/>
    <property type="match status" value="1"/>
</dbReference>
<dbReference type="Pfam" id="PF08282">
    <property type="entry name" value="Hydrolase_3"/>
    <property type="match status" value="1"/>
</dbReference>
<dbReference type="SFLD" id="SFLDG01142">
    <property type="entry name" value="C2.B.2:_Mannosyl-3-phosphoglyc"/>
    <property type="match status" value="1"/>
</dbReference>
<dbReference type="SFLD" id="SFLDG01140">
    <property type="entry name" value="C2.B:_Phosphomannomutase_and_P"/>
    <property type="match status" value="1"/>
</dbReference>
<dbReference type="SUPFAM" id="SSF56784">
    <property type="entry name" value="HAD-like"/>
    <property type="match status" value="1"/>
</dbReference>
<accession>B7MWE2</accession>